<dbReference type="EC" id="2.1.1.192" evidence="1"/>
<dbReference type="EMBL" id="CP001164">
    <property type="protein sequence ID" value="ACI39587.1"/>
    <property type="molecule type" value="Genomic_DNA"/>
</dbReference>
<dbReference type="RefSeq" id="WP_000003314.1">
    <property type="nucleotide sequence ID" value="NC_011353.1"/>
</dbReference>
<dbReference type="SMR" id="B5Z0Y6"/>
<dbReference type="KEGG" id="ecf:ECH74115_3742"/>
<dbReference type="HOGENOM" id="CLU_029101_0_0_6"/>
<dbReference type="GO" id="GO:0005737">
    <property type="term" value="C:cytoplasm"/>
    <property type="evidence" value="ECO:0007669"/>
    <property type="project" value="UniProtKB-SubCell"/>
</dbReference>
<dbReference type="GO" id="GO:0051539">
    <property type="term" value="F:4 iron, 4 sulfur cluster binding"/>
    <property type="evidence" value="ECO:0007669"/>
    <property type="project" value="UniProtKB-UniRule"/>
</dbReference>
<dbReference type="GO" id="GO:0046872">
    <property type="term" value="F:metal ion binding"/>
    <property type="evidence" value="ECO:0007669"/>
    <property type="project" value="UniProtKB-KW"/>
</dbReference>
<dbReference type="GO" id="GO:0070040">
    <property type="term" value="F:rRNA (adenine(2503)-C2-)-methyltransferase activity"/>
    <property type="evidence" value="ECO:0007669"/>
    <property type="project" value="UniProtKB-UniRule"/>
</dbReference>
<dbReference type="GO" id="GO:0019843">
    <property type="term" value="F:rRNA binding"/>
    <property type="evidence" value="ECO:0007669"/>
    <property type="project" value="UniProtKB-UniRule"/>
</dbReference>
<dbReference type="GO" id="GO:0002935">
    <property type="term" value="F:tRNA (adenine(37)-C2)-methyltransferase activity"/>
    <property type="evidence" value="ECO:0007669"/>
    <property type="project" value="UniProtKB-UniRule"/>
</dbReference>
<dbReference type="GO" id="GO:0000049">
    <property type="term" value="F:tRNA binding"/>
    <property type="evidence" value="ECO:0007669"/>
    <property type="project" value="UniProtKB-UniRule"/>
</dbReference>
<dbReference type="GO" id="GO:0070475">
    <property type="term" value="P:rRNA base methylation"/>
    <property type="evidence" value="ECO:0007669"/>
    <property type="project" value="UniProtKB-UniRule"/>
</dbReference>
<dbReference type="GO" id="GO:0030488">
    <property type="term" value="P:tRNA methylation"/>
    <property type="evidence" value="ECO:0007669"/>
    <property type="project" value="UniProtKB-UniRule"/>
</dbReference>
<dbReference type="CDD" id="cd01335">
    <property type="entry name" value="Radical_SAM"/>
    <property type="match status" value="1"/>
</dbReference>
<dbReference type="FunFam" id="1.10.150.530:FF:000001">
    <property type="entry name" value="Dual-specificity RNA methyltransferase RlmN"/>
    <property type="match status" value="1"/>
</dbReference>
<dbReference type="FunFam" id="3.20.20.70:FF:000008">
    <property type="entry name" value="Dual-specificity RNA methyltransferase RlmN"/>
    <property type="match status" value="1"/>
</dbReference>
<dbReference type="Gene3D" id="1.10.150.530">
    <property type="match status" value="1"/>
</dbReference>
<dbReference type="Gene3D" id="3.20.20.70">
    <property type="entry name" value="Aldolase class I"/>
    <property type="match status" value="1"/>
</dbReference>
<dbReference type="HAMAP" id="MF_01849">
    <property type="entry name" value="RNA_methyltr_RlmN"/>
    <property type="match status" value="1"/>
</dbReference>
<dbReference type="InterPro" id="IPR013785">
    <property type="entry name" value="Aldolase_TIM"/>
</dbReference>
<dbReference type="InterPro" id="IPR040072">
    <property type="entry name" value="Methyltransferase_A"/>
</dbReference>
<dbReference type="InterPro" id="IPR048641">
    <property type="entry name" value="RlmN_N"/>
</dbReference>
<dbReference type="InterPro" id="IPR027492">
    <property type="entry name" value="RNA_MTrfase_RlmN"/>
</dbReference>
<dbReference type="InterPro" id="IPR004383">
    <property type="entry name" value="rRNA_lsu_MTrfase_RlmN/Cfr"/>
</dbReference>
<dbReference type="InterPro" id="IPR007197">
    <property type="entry name" value="rSAM"/>
</dbReference>
<dbReference type="NCBIfam" id="NF008396">
    <property type="entry name" value="PRK11194.1"/>
    <property type="match status" value="1"/>
</dbReference>
<dbReference type="NCBIfam" id="TIGR00048">
    <property type="entry name" value="rRNA_mod_RlmN"/>
    <property type="match status" value="1"/>
</dbReference>
<dbReference type="PANTHER" id="PTHR30544">
    <property type="entry name" value="23S RRNA METHYLTRANSFERASE"/>
    <property type="match status" value="1"/>
</dbReference>
<dbReference type="PANTHER" id="PTHR30544:SF5">
    <property type="entry name" value="RADICAL SAM CORE DOMAIN-CONTAINING PROTEIN"/>
    <property type="match status" value="1"/>
</dbReference>
<dbReference type="Pfam" id="PF04055">
    <property type="entry name" value="Radical_SAM"/>
    <property type="match status" value="1"/>
</dbReference>
<dbReference type="Pfam" id="PF21016">
    <property type="entry name" value="RlmN_N"/>
    <property type="match status" value="1"/>
</dbReference>
<dbReference type="PIRSF" id="PIRSF006004">
    <property type="entry name" value="CHP00048"/>
    <property type="match status" value="1"/>
</dbReference>
<dbReference type="SFLD" id="SFLDF00275">
    <property type="entry name" value="adenosine_C2_methyltransferase"/>
    <property type="match status" value="1"/>
</dbReference>
<dbReference type="SFLD" id="SFLDS00029">
    <property type="entry name" value="Radical_SAM"/>
    <property type="match status" value="1"/>
</dbReference>
<dbReference type="SUPFAM" id="SSF102114">
    <property type="entry name" value="Radical SAM enzymes"/>
    <property type="match status" value="1"/>
</dbReference>
<dbReference type="PROSITE" id="PS51918">
    <property type="entry name" value="RADICAL_SAM"/>
    <property type="match status" value="1"/>
</dbReference>
<evidence type="ECO:0000255" key="1">
    <source>
        <dbReference type="HAMAP-Rule" id="MF_01849"/>
    </source>
</evidence>
<evidence type="ECO:0000255" key="2">
    <source>
        <dbReference type="PROSITE-ProRule" id="PRU01266"/>
    </source>
</evidence>
<sequence>MSEQLVTPENVTTKDGKINLLDLNRQQMREFFKDLGEKPFRADQVMKWMYHYCCDNFDEMTDINKVLRGKLKEVAEIRAPEVVEEQRSSDGTIKWAIAVGDQRVETVYIPEDDRATLCVSSQVGCALECKFCSTAQQGFNRNLRVSEIIGQVWRAAKIVGAAKVTGQRPITNVVMMGMGEPLLNLNNVVPAMEIMLDDFGFGLSKRRVTLSTSGVVPALDKLGDMIDVALAISLHAPNDEIRDEIVPINKKYNIETFLAAVRRYLEKSNANQGRVTIEYVMLDHVNDGTEHAHQLAELLKDTPCKINLIPWNPFPAAPYGRSSNSRIDRFSKVLMSYGFTTIVRKTRGDDIDAACGQLAGDVIDRTKRTLRKRMQGEAIDIKAV</sequence>
<reference key="1">
    <citation type="journal article" date="2011" name="Proc. Natl. Acad. Sci. U.S.A.">
        <title>Genomic anatomy of Escherichia coli O157:H7 outbreaks.</title>
        <authorList>
            <person name="Eppinger M."/>
            <person name="Mammel M.K."/>
            <person name="Leclerc J.E."/>
            <person name="Ravel J."/>
            <person name="Cebula T.A."/>
        </authorList>
    </citation>
    <scope>NUCLEOTIDE SEQUENCE [LARGE SCALE GENOMIC DNA]</scope>
    <source>
        <strain>EC4115 / EHEC</strain>
    </source>
</reference>
<keyword id="KW-0004">4Fe-4S</keyword>
<keyword id="KW-0963">Cytoplasm</keyword>
<keyword id="KW-1015">Disulfide bond</keyword>
<keyword id="KW-0408">Iron</keyword>
<keyword id="KW-0411">Iron-sulfur</keyword>
<keyword id="KW-0479">Metal-binding</keyword>
<keyword id="KW-0489">Methyltransferase</keyword>
<keyword id="KW-0698">rRNA processing</keyword>
<keyword id="KW-0949">S-adenosyl-L-methionine</keyword>
<keyword id="KW-0808">Transferase</keyword>
<keyword id="KW-0819">tRNA processing</keyword>
<name>RLMN_ECO5E</name>
<organism>
    <name type="scientific">Escherichia coli O157:H7 (strain EC4115 / EHEC)</name>
    <dbReference type="NCBI Taxonomy" id="444450"/>
    <lineage>
        <taxon>Bacteria</taxon>
        <taxon>Pseudomonadati</taxon>
        <taxon>Pseudomonadota</taxon>
        <taxon>Gammaproteobacteria</taxon>
        <taxon>Enterobacterales</taxon>
        <taxon>Enterobacteriaceae</taxon>
        <taxon>Escherichia</taxon>
    </lineage>
</organism>
<gene>
    <name evidence="1" type="primary">rlmN</name>
    <name type="ordered locus">ECH74115_3742</name>
</gene>
<protein>
    <recommendedName>
        <fullName evidence="1">Dual-specificity RNA methyltransferase RlmN</fullName>
        <ecNumber evidence="1">2.1.1.192</ecNumber>
    </recommendedName>
    <alternativeName>
        <fullName evidence="1">23S rRNA (adenine(2503)-C(2))-methyltransferase</fullName>
    </alternativeName>
    <alternativeName>
        <fullName evidence="1">23S rRNA m2A2503 methyltransferase</fullName>
    </alternativeName>
    <alternativeName>
        <fullName evidence="1">Ribosomal RNA large subunit methyltransferase N</fullName>
    </alternativeName>
    <alternativeName>
        <fullName evidence="1">tRNA (adenine(37)-C(2))-methyltransferase</fullName>
    </alternativeName>
    <alternativeName>
        <fullName evidence="1">tRNA m2A37 methyltransferase</fullName>
    </alternativeName>
</protein>
<comment type="function">
    <text evidence="1">Specifically methylates position 2 of adenine 2503 in 23S rRNA and position 2 of adenine 37 in tRNAs. m2A2503 modification seems to play a crucial role in the proofreading step occurring at the peptidyl transferase center and thus would serve to optimize ribosomal fidelity.</text>
</comment>
<comment type="catalytic activity">
    <reaction evidence="1">
        <text>adenosine(2503) in 23S rRNA + 2 reduced [2Fe-2S]-[ferredoxin] + 2 S-adenosyl-L-methionine = 2-methyladenosine(2503) in 23S rRNA + 5'-deoxyadenosine + L-methionine + 2 oxidized [2Fe-2S]-[ferredoxin] + S-adenosyl-L-homocysteine</text>
        <dbReference type="Rhea" id="RHEA:42916"/>
        <dbReference type="Rhea" id="RHEA-COMP:10000"/>
        <dbReference type="Rhea" id="RHEA-COMP:10001"/>
        <dbReference type="Rhea" id="RHEA-COMP:10152"/>
        <dbReference type="Rhea" id="RHEA-COMP:10282"/>
        <dbReference type="ChEBI" id="CHEBI:17319"/>
        <dbReference type="ChEBI" id="CHEBI:33737"/>
        <dbReference type="ChEBI" id="CHEBI:33738"/>
        <dbReference type="ChEBI" id="CHEBI:57844"/>
        <dbReference type="ChEBI" id="CHEBI:57856"/>
        <dbReference type="ChEBI" id="CHEBI:59789"/>
        <dbReference type="ChEBI" id="CHEBI:74411"/>
        <dbReference type="ChEBI" id="CHEBI:74497"/>
        <dbReference type="EC" id="2.1.1.192"/>
    </reaction>
</comment>
<comment type="catalytic activity">
    <reaction evidence="1">
        <text>adenosine(37) in tRNA + 2 reduced [2Fe-2S]-[ferredoxin] + 2 S-adenosyl-L-methionine = 2-methyladenosine(37) in tRNA + 5'-deoxyadenosine + L-methionine + 2 oxidized [2Fe-2S]-[ferredoxin] + S-adenosyl-L-homocysteine</text>
        <dbReference type="Rhea" id="RHEA:43332"/>
        <dbReference type="Rhea" id="RHEA-COMP:10000"/>
        <dbReference type="Rhea" id="RHEA-COMP:10001"/>
        <dbReference type="Rhea" id="RHEA-COMP:10162"/>
        <dbReference type="Rhea" id="RHEA-COMP:10485"/>
        <dbReference type="ChEBI" id="CHEBI:17319"/>
        <dbReference type="ChEBI" id="CHEBI:33737"/>
        <dbReference type="ChEBI" id="CHEBI:33738"/>
        <dbReference type="ChEBI" id="CHEBI:57844"/>
        <dbReference type="ChEBI" id="CHEBI:57856"/>
        <dbReference type="ChEBI" id="CHEBI:59789"/>
        <dbReference type="ChEBI" id="CHEBI:74411"/>
        <dbReference type="ChEBI" id="CHEBI:74497"/>
        <dbReference type="EC" id="2.1.1.192"/>
    </reaction>
</comment>
<comment type="cofactor">
    <cofactor evidence="1">
        <name>[4Fe-4S] cluster</name>
        <dbReference type="ChEBI" id="CHEBI:49883"/>
    </cofactor>
    <text evidence="1">Binds 1 [4Fe-4S] cluster. The cluster is coordinated with 3 cysteines and an exchangeable S-adenosyl-L-methionine.</text>
</comment>
<comment type="subcellular location">
    <subcellularLocation>
        <location evidence="1">Cytoplasm</location>
    </subcellularLocation>
</comment>
<comment type="miscellaneous">
    <text evidence="1">Reaction proceeds by a ping-pong mechanism involving intermediate methylation of a conserved cysteine residue.</text>
</comment>
<comment type="similarity">
    <text evidence="1">Belongs to the radical SAM superfamily. RlmN family.</text>
</comment>
<accession>B5Z0Y6</accession>
<proteinExistence type="inferred from homology"/>
<feature type="chain" id="PRO_1000188571" description="Dual-specificity RNA methyltransferase RlmN">
    <location>
        <begin position="1"/>
        <end position="384"/>
    </location>
</feature>
<feature type="domain" description="Radical SAM core" evidence="2">
    <location>
        <begin position="111"/>
        <end position="350"/>
    </location>
</feature>
<feature type="active site" description="Proton acceptor" evidence="1">
    <location>
        <position position="105"/>
    </location>
</feature>
<feature type="active site" description="S-methylcysteine intermediate" evidence="1">
    <location>
        <position position="355"/>
    </location>
</feature>
<feature type="binding site" evidence="1">
    <location>
        <position position="125"/>
    </location>
    <ligand>
        <name>[4Fe-4S] cluster</name>
        <dbReference type="ChEBI" id="CHEBI:49883"/>
        <note>4Fe-4S-S-AdoMet</note>
    </ligand>
</feature>
<feature type="binding site" evidence="1">
    <location>
        <position position="129"/>
    </location>
    <ligand>
        <name>[4Fe-4S] cluster</name>
        <dbReference type="ChEBI" id="CHEBI:49883"/>
        <note>4Fe-4S-S-AdoMet</note>
    </ligand>
</feature>
<feature type="binding site" evidence="1">
    <location>
        <position position="132"/>
    </location>
    <ligand>
        <name>[4Fe-4S] cluster</name>
        <dbReference type="ChEBI" id="CHEBI:49883"/>
        <note>4Fe-4S-S-AdoMet</note>
    </ligand>
</feature>
<feature type="binding site" evidence="1">
    <location>
        <begin position="179"/>
        <end position="180"/>
    </location>
    <ligand>
        <name>S-adenosyl-L-methionine</name>
        <dbReference type="ChEBI" id="CHEBI:59789"/>
    </ligand>
</feature>
<feature type="binding site" evidence="1">
    <location>
        <position position="211"/>
    </location>
    <ligand>
        <name>S-adenosyl-L-methionine</name>
        <dbReference type="ChEBI" id="CHEBI:59789"/>
    </ligand>
</feature>
<feature type="binding site" evidence="1">
    <location>
        <begin position="233"/>
        <end position="235"/>
    </location>
    <ligand>
        <name>S-adenosyl-L-methionine</name>
        <dbReference type="ChEBI" id="CHEBI:59789"/>
    </ligand>
</feature>
<feature type="binding site" evidence="1">
    <location>
        <position position="312"/>
    </location>
    <ligand>
        <name>S-adenosyl-L-methionine</name>
        <dbReference type="ChEBI" id="CHEBI:59789"/>
    </ligand>
</feature>
<feature type="disulfide bond" description="(transient)" evidence="1">
    <location>
        <begin position="118"/>
        <end position="355"/>
    </location>
</feature>